<evidence type="ECO:0000255" key="1">
    <source>
        <dbReference type="HAMAP-Rule" id="MF_00001"/>
    </source>
</evidence>
<feature type="chain" id="PRO_1000116159" description="Aspartate carbamoyltransferase catalytic subunit">
    <location>
        <begin position="1"/>
        <end position="307"/>
    </location>
</feature>
<feature type="binding site" evidence="1">
    <location>
        <position position="56"/>
    </location>
    <ligand>
        <name>carbamoyl phosphate</name>
        <dbReference type="ChEBI" id="CHEBI:58228"/>
    </ligand>
</feature>
<feature type="binding site" evidence="1">
    <location>
        <position position="57"/>
    </location>
    <ligand>
        <name>carbamoyl phosphate</name>
        <dbReference type="ChEBI" id="CHEBI:58228"/>
    </ligand>
</feature>
<feature type="binding site" evidence="1">
    <location>
        <position position="84"/>
    </location>
    <ligand>
        <name>L-aspartate</name>
        <dbReference type="ChEBI" id="CHEBI:29991"/>
    </ligand>
</feature>
<feature type="binding site" evidence="1">
    <location>
        <position position="106"/>
    </location>
    <ligand>
        <name>carbamoyl phosphate</name>
        <dbReference type="ChEBI" id="CHEBI:58228"/>
    </ligand>
</feature>
<feature type="binding site" evidence="1">
    <location>
        <position position="136"/>
    </location>
    <ligand>
        <name>carbamoyl phosphate</name>
        <dbReference type="ChEBI" id="CHEBI:58228"/>
    </ligand>
</feature>
<feature type="binding site" evidence="1">
    <location>
        <position position="139"/>
    </location>
    <ligand>
        <name>carbamoyl phosphate</name>
        <dbReference type="ChEBI" id="CHEBI:58228"/>
    </ligand>
</feature>
<feature type="binding site" evidence="1">
    <location>
        <position position="169"/>
    </location>
    <ligand>
        <name>L-aspartate</name>
        <dbReference type="ChEBI" id="CHEBI:29991"/>
    </ligand>
</feature>
<feature type="binding site" evidence="1">
    <location>
        <position position="221"/>
    </location>
    <ligand>
        <name>L-aspartate</name>
        <dbReference type="ChEBI" id="CHEBI:29991"/>
    </ligand>
</feature>
<feature type="binding site" evidence="1">
    <location>
        <position position="262"/>
    </location>
    <ligand>
        <name>carbamoyl phosphate</name>
        <dbReference type="ChEBI" id="CHEBI:58228"/>
    </ligand>
</feature>
<feature type="binding site" evidence="1">
    <location>
        <position position="263"/>
    </location>
    <ligand>
        <name>carbamoyl phosphate</name>
        <dbReference type="ChEBI" id="CHEBI:58228"/>
    </ligand>
</feature>
<sequence>MSENQQALNHVVSMEDLTVDQVMKLIKRGIEFKNGAQLPYEDHPIVSNLFFEDSTRTHKSFEVAEIKLGLERLDFDVKTSSVNKGETLYDTILTLSALGVDVCVIRHPEVDYYRELIASPTITTSIINGGDGSGQHPSQSLLDLMTIYEEFGHFEGLKVAIAGDLDHSRVAKSNMQILKRLGAELFFAGPEEWRSQEFADYGKFVTIDEIIDQVDVMMFLRVQHERHDSGAVFSKEDYHAQHGLTQERYDRLKETAILMHPAPINRDVEIADHLVEAPKSRIVQQMTNGVFVRMAILESVLASRNAN</sequence>
<dbReference type="EC" id="2.1.3.2" evidence="1"/>
<dbReference type="EMBL" id="CP000918">
    <property type="protein sequence ID" value="ACO16445.1"/>
    <property type="molecule type" value="Genomic_DNA"/>
</dbReference>
<dbReference type="RefSeq" id="WP_001293836.1">
    <property type="nucleotide sequence ID" value="NC_012468.1"/>
</dbReference>
<dbReference type="SMR" id="C1C7Q5"/>
<dbReference type="KEGG" id="snm:SP70585_1340"/>
<dbReference type="HOGENOM" id="CLU_043846_2_1_9"/>
<dbReference type="UniPathway" id="UPA00070">
    <property type="reaction ID" value="UER00116"/>
</dbReference>
<dbReference type="Proteomes" id="UP000002211">
    <property type="component" value="Chromosome"/>
</dbReference>
<dbReference type="GO" id="GO:0005829">
    <property type="term" value="C:cytosol"/>
    <property type="evidence" value="ECO:0007669"/>
    <property type="project" value="TreeGrafter"/>
</dbReference>
<dbReference type="GO" id="GO:0016597">
    <property type="term" value="F:amino acid binding"/>
    <property type="evidence" value="ECO:0007669"/>
    <property type="project" value="InterPro"/>
</dbReference>
<dbReference type="GO" id="GO:0004070">
    <property type="term" value="F:aspartate carbamoyltransferase activity"/>
    <property type="evidence" value="ECO:0007669"/>
    <property type="project" value="UniProtKB-UniRule"/>
</dbReference>
<dbReference type="GO" id="GO:0006207">
    <property type="term" value="P:'de novo' pyrimidine nucleobase biosynthetic process"/>
    <property type="evidence" value="ECO:0007669"/>
    <property type="project" value="InterPro"/>
</dbReference>
<dbReference type="GO" id="GO:0044205">
    <property type="term" value="P:'de novo' UMP biosynthetic process"/>
    <property type="evidence" value="ECO:0007669"/>
    <property type="project" value="UniProtKB-UniRule"/>
</dbReference>
<dbReference type="GO" id="GO:0006520">
    <property type="term" value="P:amino acid metabolic process"/>
    <property type="evidence" value="ECO:0007669"/>
    <property type="project" value="InterPro"/>
</dbReference>
<dbReference type="FunFam" id="3.40.50.1370:FF:000011">
    <property type="entry name" value="Aspartate carbamoyltransferase"/>
    <property type="match status" value="1"/>
</dbReference>
<dbReference type="Gene3D" id="3.40.50.1370">
    <property type="entry name" value="Aspartate/ornithine carbamoyltransferase"/>
    <property type="match status" value="2"/>
</dbReference>
<dbReference type="HAMAP" id="MF_00001">
    <property type="entry name" value="Asp_carb_tr"/>
    <property type="match status" value="1"/>
</dbReference>
<dbReference type="InterPro" id="IPR006132">
    <property type="entry name" value="Asp/Orn_carbamoyltranf_P-bd"/>
</dbReference>
<dbReference type="InterPro" id="IPR006130">
    <property type="entry name" value="Asp/Orn_carbamoylTrfase"/>
</dbReference>
<dbReference type="InterPro" id="IPR036901">
    <property type="entry name" value="Asp/Orn_carbamoylTrfase_sf"/>
</dbReference>
<dbReference type="InterPro" id="IPR002082">
    <property type="entry name" value="Asp_carbamoyltransf"/>
</dbReference>
<dbReference type="InterPro" id="IPR006131">
    <property type="entry name" value="Asp_carbamoyltransf_Asp/Orn-bd"/>
</dbReference>
<dbReference type="NCBIfam" id="TIGR00670">
    <property type="entry name" value="asp_carb_tr"/>
    <property type="match status" value="1"/>
</dbReference>
<dbReference type="NCBIfam" id="NF002032">
    <property type="entry name" value="PRK00856.1"/>
    <property type="match status" value="1"/>
</dbReference>
<dbReference type="PANTHER" id="PTHR45753:SF6">
    <property type="entry name" value="ASPARTATE CARBAMOYLTRANSFERASE"/>
    <property type="match status" value="1"/>
</dbReference>
<dbReference type="PANTHER" id="PTHR45753">
    <property type="entry name" value="ORNITHINE CARBAMOYLTRANSFERASE, MITOCHONDRIAL"/>
    <property type="match status" value="1"/>
</dbReference>
<dbReference type="Pfam" id="PF00185">
    <property type="entry name" value="OTCace"/>
    <property type="match status" value="1"/>
</dbReference>
<dbReference type="Pfam" id="PF02729">
    <property type="entry name" value="OTCace_N"/>
    <property type="match status" value="1"/>
</dbReference>
<dbReference type="PRINTS" id="PR00100">
    <property type="entry name" value="AOTCASE"/>
</dbReference>
<dbReference type="PRINTS" id="PR00101">
    <property type="entry name" value="ATCASE"/>
</dbReference>
<dbReference type="SUPFAM" id="SSF53671">
    <property type="entry name" value="Aspartate/ornithine carbamoyltransferase"/>
    <property type="match status" value="1"/>
</dbReference>
<dbReference type="PROSITE" id="PS00097">
    <property type="entry name" value="CARBAMOYLTRANSFERASE"/>
    <property type="match status" value="1"/>
</dbReference>
<accession>C1C7Q5</accession>
<proteinExistence type="inferred from homology"/>
<comment type="function">
    <text evidence="1">Catalyzes the condensation of carbamoyl phosphate and aspartate to form carbamoyl aspartate and inorganic phosphate, the committed step in the de novo pyrimidine nucleotide biosynthesis pathway.</text>
</comment>
<comment type="catalytic activity">
    <reaction evidence="1">
        <text>carbamoyl phosphate + L-aspartate = N-carbamoyl-L-aspartate + phosphate + H(+)</text>
        <dbReference type="Rhea" id="RHEA:20013"/>
        <dbReference type="ChEBI" id="CHEBI:15378"/>
        <dbReference type="ChEBI" id="CHEBI:29991"/>
        <dbReference type="ChEBI" id="CHEBI:32814"/>
        <dbReference type="ChEBI" id="CHEBI:43474"/>
        <dbReference type="ChEBI" id="CHEBI:58228"/>
        <dbReference type="EC" id="2.1.3.2"/>
    </reaction>
</comment>
<comment type="pathway">
    <text evidence="1">Pyrimidine metabolism; UMP biosynthesis via de novo pathway; (S)-dihydroorotate from bicarbonate: step 2/3.</text>
</comment>
<comment type="subunit">
    <text evidence="1">Heterododecamer (2C3:3R2) of six catalytic PyrB chains organized as two trimers (C3), and six regulatory PyrI chains organized as three dimers (R2).</text>
</comment>
<comment type="similarity">
    <text evidence="1">Belongs to the aspartate/ornithine carbamoyltransferase superfamily. ATCase family.</text>
</comment>
<keyword id="KW-0665">Pyrimidine biosynthesis</keyword>
<keyword id="KW-0808">Transferase</keyword>
<reference key="1">
    <citation type="journal article" date="2010" name="Genome Biol.">
        <title>Structure and dynamics of the pan-genome of Streptococcus pneumoniae and closely related species.</title>
        <authorList>
            <person name="Donati C."/>
            <person name="Hiller N.L."/>
            <person name="Tettelin H."/>
            <person name="Muzzi A."/>
            <person name="Croucher N.J."/>
            <person name="Angiuoli S.V."/>
            <person name="Oggioni M."/>
            <person name="Dunning Hotopp J.C."/>
            <person name="Hu F.Z."/>
            <person name="Riley D.R."/>
            <person name="Covacci A."/>
            <person name="Mitchell T.J."/>
            <person name="Bentley S.D."/>
            <person name="Kilian M."/>
            <person name="Ehrlich G.D."/>
            <person name="Rappuoli R."/>
            <person name="Moxon E.R."/>
            <person name="Masignani V."/>
        </authorList>
    </citation>
    <scope>NUCLEOTIDE SEQUENCE [LARGE SCALE GENOMIC DNA]</scope>
    <source>
        <strain>70585</strain>
    </source>
</reference>
<organism>
    <name type="scientific">Streptococcus pneumoniae (strain 70585)</name>
    <dbReference type="NCBI Taxonomy" id="488221"/>
    <lineage>
        <taxon>Bacteria</taxon>
        <taxon>Bacillati</taxon>
        <taxon>Bacillota</taxon>
        <taxon>Bacilli</taxon>
        <taxon>Lactobacillales</taxon>
        <taxon>Streptococcaceae</taxon>
        <taxon>Streptococcus</taxon>
    </lineage>
</organism>
<protein>
    <recommendedName>
        <fullName evidence="1">Aspartate carbamoyltransferase catalytic subunit</fullName>
        <ecNumber evidence="1">2.1.3.2</ecNumber>
    </recommendedName>
    <alternativeName>
        <fullName evidence="1">Aspartate transcarbamylase</fullName>
        <shortName evidence="1">ATCase</shortName>
    </alternativeName>
</protein>
<name>PYRB_STRP7</name>
<gene>
    <name evidence="1" type="primary">pyrB</name>
    <name type="ordered locus">SP70585_1340</name>
</gene>